<proteinExistence type="inferred from homology"/>
<comment type="function">
    <text evidence="2">Component of the ubiquinol-cytochrome c reductase complex (complex III or cytochrome b-c1 complex) that is part of the mitochondrial respiratory chain. The b-c1 complex mediates electron transfer from ubiquinol to cytochrome c. Contributes to the generation of a proton gradient across the mitochondrial membrane that is then used for ATP synthesis.</text>
</comment>
<comment type="cofactor">
    <cofactor evidence="2">
        <name>heme b</name>
        <dbReference type="ChEBI" id="CHEBI:60344"/>
    </cofactor>
    <text evidence="2">Binds 2 heme b groups non-covalently.</text>
</comment>
<comment type="subunit">
    <text evidence="2">The cytochrome bc1 complex contains 11 subunits: 3 respiratory subunits (MT-CYB, CYC1 and UQCRFS1), 2 core proteins (UQCRC1 and UQCRC2) and 6 low-molecular weight proteins (UQCRH/QCR6, UQCRB/QCR7, UQCRQ/QCR8, UQCR10/QCR9, UQCR11/QCR10 and a cleavage product of UQCRFS1). This cytochrome bc1 complex then forms a dimer.</text>
</comment>
<comment type="subcellular location">
    <subcellularLocation>
        <location evidence="2">Mitochondrion inner membrane</location>
        <topology evidence="2">Multi-pass membrane protein</topology>
    </subcellularLocation>
</comment>
<comment type="miscellaneous">
    <text evidence="1">Heme 1 (or BL or b562) is low-potential and absorbs at about 562 nm, and heme 2 (or BH or b566) is high-potential and absorbs at about 566 nm.</text>
</comment>
<comment type="similarity">
    <text evidence="3 4">Belongs to the cytochrome b family.</text>
</comment>
<comment type="caution">
    <text evidence="2">The full-length protein contains only eight transmembrane helices, not nine as predicted by bioinformatics tools.</text>
</comment>
<feature type="chain" id="PRO_0000061656" description="Cytochrome b">
    <location>
        <begin position="1"/>
        <end position="380"/>
    </location>
</feature>
<feature type="transmembrane region" description="Helical" evidence="2">
    <location>
        <begin position="34"/>
        <end position="54"/>
    </location>
</feature>
<feature type="transmembrane region" description="Helical" evidence="2">
    <location>
        <begin position="78"/>
        <end position="99"/>
    </location>
</feature>
<feature type="transmembrane region" description="Helical" evidence="2">
    <location>
        <begin position="114"/>
        <end position="134"/>
    </location>
</feature>
<feature type="transmembrane region" description="Helical" evidence="2">
    <location>
        <begin position="179"/>
        <end position="199"/>
    </location>
</feature>
<feature type="transmembrane region" description="Helical" evidence="2">
    <location>
        <begin position="227"/>
        <end position="247"/>
    </location>
</feature>
<feature type="transmembrane region" description="Helical" evidence="2">
    <location>
        <begin position="289"/>
        <end position="309"/>
    </location>
</feature>
<feature type="transmembrane region" description="Helical" evidence="2">
    <location>
        <begin position="321"/>
        <end position="341"/>
    </location>
</feature>
<feature type="transmembrane region" description="Helical" evidence="2">
    <location>
        <begin position="348"/>
        <end position="368"/>
    </location>
</feature>
<feature type="binding site" description="axial binding residue" evidence="2">
    <location>
        <position position="84"/>
    </location>
    <ligand>
        <name>heme b</name>
        <dbReference type="ChEBI" id="CHEBI:60344"/>
        <label>b562</label>
    </ligand>
    <ligandPart>
        <name>Fe</name>
        <dbReference type="ChEBI" id="CHEBI:18248"/>
    </ligandPart>
</feature>
<feature type="binding site" description="axial binding residue" evidence="2">
    <location>
        <position position="98"/>
    </location>
    <ligand>
        <name>heme b</name>
        <dbReference type="ChEBI" id="CHEBI:60344"/>
        <label>b566</label>
    </ligand>
    <ligandPart>
        <name>Fe</name>
        <dbReference type="ChEBI" id="CHEBI:18248"/>
    </ligandPart>
</feature>
<feature type="binding site" description="axial binding residue" evidence="2">
    <location>
        <position position="183"/>
    </location>
    <ligand>
        <name>heme b</name>
        <dbReference type="ChEBI" id="CHEBI:60344"/>
        <label>b562</label>
    </ligand>
    <ligandPart>
        <name>Fe</name>
        <dbReference type="ChEBI" id="CHEBI:18248"/>
    </ligandPart>
</feature>
<feature type="binding site" description="axial binding residue" evidence="2">
    <location>
        <position position="197"/>
    </location>
    <ligand>
        <name>heme b</name>
        <dbReference type="ChEBI" id="CHEBI:60344"/>
        <label>b566</label>
    </ligand>
    <ligandPart>
        <name>Fe</name>
        <dbReference type="ChEBI" id="CHEBI:18248"/>
    </ligandPart>
</feature>
<feature type="binding site" evidence="2">
    <location>
        <position position="202"/>
    </location>
    <ligand>
        <name>a ubiquinone</name>
        <dbReference type="ChEBI" id="CHEBI:16389"/>
    </ligand>
</feature>
<gene>
    <name type="primary">MT-CYB</name>
    <name type="synonym">COB</name>
    <name type="synonym">CYTB</name>
    <name type="synonym">MTCYB</name>
</gene>
<geneLocation type="mitochondrion"/>
<evidence type="ECO:0000250" key="1"/>
<evidence type="ECO:0000250" key="2">
    <source>
        <dbReference type="UniProtKB" id="P00157"/>
    </source>
</evidence>
<evidence type="ECO:0000255" key="3">
    <source>
        <dbReference type="PROSITE-ProRule" id="PRU00967"/>
    </source>
</evidence>
<evidence type="ECO:0000255" key="4">
    <source>
        <dbReference type="PROSITE-ProRule" id="PRU00968"/>
    </source>
</evidence>
<organism>
    <name type="scientific">Thalassoica antarctica</name>
    <name type="common">Antarctic petrel</name>
    <dbReference type="NCBI Taxonomy" id="79659"/>
    <lineage>
        <taxon>Eukaryota</taxon>
        <taxon>Metazoa</taxon>
        <taxon>Chordata</taxon>
        <taxon>Craniata</taxon>
        <taxon>Vertebrata</taxon>
        <taxon>Euteleostomi</taxon>
        <taxon>Archelosauria</taxon>
        <taxon>Archosauria</taxon>
        <taxon>Dinosauria</taxon>
        <taxon>Saurischia</taxon>
        <taxon>Theropoda</taxon>
        <taxon>Coelurosauria</taxon>
        <taxon>Aves</taxon>
        <taxon>Neognathae</taxon>
        <taxon>Neoaves</taxon>
        <taxon>Aequornithes</taxon>
        <taxon>Procellariiformes</taxon>
        <taxon>Procellariidae</taxon>
        <taxon>Thalassoica</taxon>
    </lineage>
</organism>
<name>CYB_THAAN</name>
<sequence length="380" mass="42600">MAPNLRKSHPLLKMVNNSLIDLPTPSNISAWWNFGSLLGICLMTQILTGLLLAMHYTADTTLAFSSVAHTCRNVQYGWLIRNLHANGASFFFICIYLHIGRGFYYGSYLYKETWNTGIILLLTLMATAFVGYVLPWGQMSFWGATVITNLFSAIPYIGQTLVEWAWGGFSVDNPTLTRFFALHFLLPFAIAGLTLIHLTFLHESGSNNPLGIVSNCDKIPFHPYFTLKDILGFTLMFLPLTSLALFSPNLLGDPENFTPANPLVTPPHIKPEWYFLFAYAILRSIPNKLGGVLALAASVLVLFLSPFLHKAKQRTMTFRPLSQLLFWILVTNLFILTWVGSQPVEHPFIIIGQLASVTYFTILLILFPAIGALENKMLNF</sequence>
<protein>
    <recommendedName>
        <fullName>Cytochrome b</fullName>
    </recommendedName>
    <alternativeName>
        <fullName>Complex III subunit 3</fullName>
    </alternativeName>
    <alternativeName>
        <fullName>Complex III subunit III</fullName>
    </alternativeName>
    <alternativeName>
        <fullName>Cytochrome b-c1 complex subunit 3</fullName>
    </alternativeName>
    <alternativeName>
        <fullName>Ubiquinol-cytochrome-c reductase complex cytochrome b subunit</fullName>
    </alternativeName>
</protein>
<reference key="1">
    <citation type="journal article" date="1998" name="Mol. Biol. Evol.">
        <title>Body size effects and rates of cytochrome-b evolution in tube-nosed seabirds.</title>
        <authorList>
            <person name="Nunn G.B."/>
            <person name="Stanley S.E."/>
        </authorList>
    </citation>
    <scope>NUCLEOTIDE SEQUENCE [GENOMIC DNA]</scope>
    <source>
        <strain>Isolate Antpet</strain>
    </source>
</reference>
<accession>O79230</accession>
<keyword id="KW-0249">Electron transport</keyword>
<keyword id="KW-0349">Heme</keyword>
<keyword id="KW-0408">Iron</keyword>
<keyword id="KW-0472">Membrane</keyword>
<keyword id="KW-0479">Metal-binding</keyword>
<keyword id="KW-0496">Mitochondrion</keyword>
<keyword id="KW-0999">Mitochondrion inner membrane</keyword>
<keyword id="KW-0679">Respiratory chain</keyword>
<keyword id="KW-0812">Transmembrane</keyword>
<keyword id="KW-1133">Transmembrane helix</keyword>
<keyword id="KW-0813">Transport</keyword>
<keyword id="KW-0830">Ubiquinone</keyword>
<dbReference type="EMBL" id="AF076095">
    <property type="protein sequence ID" value="AAC68652.1"/>
    <property type="molecule type" value="Genomic_DNA"/>
</dbReference>
<dbReference type="SMR" id="O79230"/>
<dbReference type="GO" id="GO:0005743">
    <property type="term" value="C:mitochondrial inner membrane"/>
    <property type="evidence" value="ECO:0007669"/>
    <property type="project" value="UniProtKB-SubCell"/>
</dbReference>
<dbReference type="GO" id="GO:0045275">
    <property type="term" value="C:respiratory chain complex III"/>
    <property type="evidence" value="ECO:0007669"/>
    <property type="project" value="InterPro"/>
</dbReference>
<dbReference type="GO" id="GO:0046872">
    <property type="term" value="F:metal ion binding"/>
    <property type="evidence" value="ECO:0007669"/>
    <property type="project" value="UniProtKB-KW"/>
</dbReference>
<dbReference type="GO" id="GO:0008121">
    <property type="term" value="F:ubiquinol-cytochrome-c reductase activity"/>
    <property type="evidence" value="ECO:0007669"/>
    <property type="project" value="InterPro"/>
</dbReference>
<dbReference type="GO" id="GO:0006122">
    <property type="term" value="P:mitochondrial electron transport, ubiquinol to cytochrome c"/>
    <property type="evidence" value="ECO:0007669"/>
    <property type="project" value="TreeGrafter"/>
</dbReference>
<dbReference type="CDD" id="cd00290">
    <property type="entry name" value="cytochrome_b_C"/>
    <property type="match status" value="1"/>
</dbReference>
<dbReference type="CDD" id="cd00284">
    <property type="entry name" value="Cytochrome_b_N"/>
    <property type="match status" value="1"/>
</dbReference>
<dbReference type="FunFam" id="1.20.810.10:FF:000002">
    <property type="entry name" value="Cytochrome b"/>
    <property type="match status" value="1"/>
</dbReference>
<dbReference type="Gene3D" id="1.20.810.10">
    <property type="entry name" value="Cytochrome Bc1 Complex, Chain C"/>
    <property type="match status" value="1"/>
</dbReference>
<dbReference type="InterPro" id="IPR005798">
    <property type="entry name" value="Cyt_b/b6_C"/>
</dbReference>
<dbReference type="InterPro" id="IPR036150">
    <property type="entry name" value="Cyt_b/b6_C_sf"/>
</dbReference>
<dbReference type="InterPro" id="IPR005797">
    <property type="entry name" value="Cyt_b/b6_N"/>
</dbReference>
<dbReference type="InterPro" id="IPR027387">
    <property type="entry name" value="Cytb/b6-like_sf"/>
</dbReference>
<dbReference type="InterPro" id="IPR030689">
    <property type="entry name" value="Cytochrome_b"/>
</dbReference>
<dbReference type="InterPro" id="IPR048260">
    <property type="entry name" value="Cytochrome_b_C_euk/bac"/>
</dbReference>
<dbReference type="InterPro" id="IPR048259">
    <property type="entry name" value="Cytochrome_b_N_euk/bac"/>
</dbReference>
<dbReference type="InterPro" id="IPR016174">
    <property type="entry name" value="Di-haem_cyt_TM"/>
</dbReference>
<dbReference type="PANTHER" id="PTHR19271">
    <property type="entry name" value="CYTOCHROME B"/>
    <property type="match status" value="1"/>
</dbReference>
<dbReference type="PANTHER" id="PTHR19271:SF16">
    <property type="entry name" value="CYTOCHROME B"/>
    <property type="match status" value="1"/>
</dbReference>
<dbReference type="Pfam" id="PF00032">
    <property type="entry name" value="Cytochrom_B_C"/>
    <property type="match status" value="1"/>
</dbReference>
<dbReference type="Pfam" id="PF00033">
    <property type="entry name" value="Cytochrome_B"/>
    <property type="match status" value="1"/>
</dbReference>
<dbReference type="PIRSF" id="PIRSF038885">
    <property type="entry name" value="COB"/>
    <property type="match status" value="1"/>
</dbReference>
<dbReference type="SUPFAM" id="SSF81648">
    <property type="entry name" value="a domain/subunit of cytochrome bc1 complex (Ubiquinol-cytochrome c reductase)"/>
    <property type="match status" value="1"/>
</dbReference>
<dbReference type="SUPFAM" id="SSF81342">
    <property type="entry name" value="Transmembrane di-heme cytochromes"/>
    <property type="match status" value="1"/>
</dbReference>
<dbReference type="PROSITE" id="PS51003">
    <property type="entry name" value="CYTB_CTER"/>
    <property type="match status" value="1"/>
</dbReference>
<dbReference type="PROSITE" id="PS51002">
    <property type="entry name" value="CYTB_NTER"/>
    <property type="match status" value="1"/>
</dbReference>